<dbReference type="EC" id="3.1.26.4" evidence="1"/>
<dbReference type="EMBL" id="CP000308">
    <property type="protein sequence ID" value="ABG12527.1"/>
    <property type="molecule type" value="Genomic_DNA"/>
</dbReference>
<dbReference type="RefSeq" id="WP_002210699.1">
    <property type="nucleotide sequence ID" value="NZ_CP009906.1"/>
</dbReference>
<dbReference type="SMR" id="Q1CAJ5"/>
<dbReference type="GeneID" id="57977475"/>
<dbReference type="KEGG" id="ypa:YPA_0559"/>
<dbReference type="Proteomes" id="UP000001971">
    <property type="component" value="Chromosome"/>
</dbReference>
<dbReference type="GO" id="GO:0005737">
    <property type="term" value="C:cytoplasm"/>
    <property type="evidence" value="ECO:0007669"/>
    <property type="project" value="UniProtKB-SubCell"/>
</dbReference>
<dbReference type="GO" id="GO:0000287">
    <property type="term" value="F:magnesium ion binding"/>
    <property type="evidence" value="ECO:0007669"/>
    <property type="project" value="UniProtKB-UniRule"/>
</dbReference>
<dbReference type="GO" id="GO:0003676">
    <property type="term" value="F:nucleic acid binding"/>
    <property type="evidence" value="ECO:0007669"/>
    <property type="project" value="InterPro"/>
</dbReference>
<dbReference type="GO" id="GO:0004523">
    <property type="term" value="F:RNA-DNA hybrid ribonuclease activity"/>
    <property type="evidence" value="ECO:0007669"/>
    <property type="project" value="UniProtKB-UniRule"/>
</dbReference>
<dbReference type="GO" id="GO:0043137">
    <property type="term" value="P:DNA replication, removal of RNA primer"/>
    <property type="evidence" value="ECO:0007669"/>
    <property type="project" value="TreeGrafter"/>
</dbReference>
<dbReference type="CDD" id="cd09278">
    <property type="entry name" value="RNase_HI_prokaryote_like"/>
    <property type="match status" value="1"/>
</dbReference>
<dbReference type="FunFam" id="3.30.420.10:FF:000008">
    <property type="entry name" value="Ribonuclease H"/>
    <property type="match status" value="1"/>
</dbReference>
<dbReference type="Gene3D" id="3.30.420.10">
    <property type="entry name" value="Ribonuclease H-like superfamily/Ribonuclease H"/>
    <property type="match status" value="1"/>
</dbReference>
<dbReference type="HAMAP" id="MF_00042">
    <property type="entry name" value="RNase_H"/>
    <property type="match status" value="1"/>
</dbReference>
<dbReference type="InterPro" id="IPR050092">
    <property type="entry name" value="RNase_H"/>
</dbReference>
<dbReference type="InterPro" id="IPR012337">
    <property type="entry name" value="RNaseH-like_sf"/>
</dbReference>
<dbReference type="InterPro" id="IPR002156">
    <property type="entry name" value="RNaseH_domain"/>
</dbReference>
<dbReference type="InterPro" id="IPR036397">
    <property type="entry name" value="RNaseH_sf"/>
</dbReference>
<dbReference type="InterPro" id="IPR022892">
    <property type="entry name" value="RNaseHI"/>
</dbReference>
<dbReference type="NCBIfam" id="NF001236">
    <property type="entry name" value="PRK00203.1"/>
    <property type="match status" value="1"/>
</dbReference>
<dbReference type="PANTHER" id="PTHR10642">
    <property type="entry name" value="RIBONUCLEASE H1"/>
    <property type="match status" value="1"/>
</dbReference>
<dbReference type="PANTHER" id="PTHR10642:SF26">
    <property type="entry name" value="RIBONUCLEASE H1"/>
    <property type="match status" value="1"/>
</dbReference>
<dbReference type="Pfam" id="PF00075">
    <property type="entry name" value="RNase_H"/>
    <property type="match status" value="1"/>
</dbReference>
<dbReference type="SUPFAM" id="SSF53098">
    <property type="entry name" value="Ribonuclease H-like"/>
    <property type="match status" value="1"/>
</dbReference>
<dbReference type="PROSITE" id="PS50879">
    <property type="entry name" value="RNASE_H_1"/>
    <property type="match status" value="1"/>
</dbReference>
<sequence>MTKQVEIFTDGSCLGNPGPGGYGAILRYKQHEKTFSAGYYLTTNNRMELMAAIVALEALTSPCEVTLSTDSQYVRQGITQWIHNWKKRGWKTADRKPVRNVDLWQRLDLAIQSHTIQWEWVKGHAGHPENERCDELARQGANSPTLDDTGYNPD</sequence>
<evidence type="ECO:0000255" key="1">
    <source>
        <dbReference type="HAMAP-Rule" id="MF_00042"/>
    </source>
</evidence>
<evidence type="ECO:0000255" key="2">
    <source>
        <dbReference type="PROSITE-ProRule" id="PRU00408"/>
    </source>
</evidence>
<keyword id="KW-0963">Cytoplasm</keyword>
<keyword id="KW-0255">Endonuclease</keyword>
<keyword id="KW-0378">Hydrolase</keyword>
<keyword id="KW-0460">Magnesium</keyword>
<keyword id="KW-0479">Metal-binding</keyword>
<keyword id="KW-0540">Nuclease</keyword>
<feature type="chain" id="PRO_1000074686" description="Ribonuclease H">
    <location>
        <begin position="1"/>
        <end position="154"/>
    </location>
</feature>
<feature type="domain" description="RNase H type-1" evidence="2">
    <location>
        <begin position="1"/>
        <end position="142"/>
    </location>
</feature>
<feature type="binding site" evidence="1">
    <location>
        <position position="10"/>
    </location>
    <ligand>
        <name>Mg(2+)</name>
        <dbReference type="ChEBI" id="CHEBI:18420"/>
        <label>1</label>
    </ligand>
</feature>
<feature type="binding site" evidence="1">
    <location>
        <position position="10"/>
    </location>
    <ligand>
        <name>Mg(2+)</name>
        <dbReference type="ChEBI" id="CHEBI:18420"/>
        <label>2</label>
    </ligand>
</feature>
<feature type="binding site" evidence="1">
    <location>
        <position position="48"/>
    </location>
    <ligand>
        <name>Mg(2+)</name>
        <dbReference type="ChEBI" id="CHEBI:18420"/>
        <label>1</label>
    </ligand>
</feature>
<feature type="binding site" evidence="1">
    <location>
        <position position="70"/>
    </location>
    <ligand>
        <name>Mg(2+)</name>
        <dbReference type="ChEBI" id="CHEBI:18420"/>
        <label>1</label>
    </ligand>
</feature>
<feature type="binding site" evidence="1">
    <location>
        <position position="134"/>
    </location>
    <ligand>
        <name>Mg(2+)</name>
        <dbReference type="ChEBI" id="CHEBI:18420"/>
        <label>2</label>
    </ligand>
</feature>
<protein>
    <recommendedName>
        <fullName evidence="1">Ribonuclease H</fullName>
        <shortName evidence="1">RNase H</shortName>
        <ecNumber evidence="1">3.1.26.4</ecNumber>
    </recommendedName>
</protein>
<organism>
    <name type="scientific">Yersinia pestis bv. Antiqua (strain Antiqua)</name>
    <dbReference type="NCBI Taxonomy" id="360102"/>
    <lineage>
        <taxon>Bacteria</taxon>
        <taxon>Pseudomonadati</taxon>
        <taxon>Pseudomonadota</taxon>
        <taxon>Gammaproteobacteria</taxon>
        <taxon>Enterobacterales</taxon>
        <taxon>Yersiniaceae</taxon>
        <taxon>Yersinia</taxon>
    </lineage>
</organism>
<reference key="1">
    <citation type="journal article" date="2006" name="J. Bacteriol.">
        <title>Complete genome sequence of Yersinia pestis strains Antiqua and Nepal516: evidence of gene reduction in an emerging pathogen.</title>
        <authorList>
            <person name="Chain P.S.G."/>
            <person name="Hu P."/>
            <person name="Malfatti S.A."/>
            <person name="Radnedge L."/>
            <person name="Larimer F."/>
            <person name="Vergez L.M."/>
            <person name="Worsham P."/>
            <person name="Chu M.C."/>
            <person name="Andersen G.L."/>
        </authorList>
    </citation>
    <scope>NUCLEOTIDE SEQUENCE [LARGE SCALE GENOMIC DNA]</scope>
    <source>
        <strain>Antiqua</strain>
    </source>
</reference>
<gene>
    <name evidence="1" type="primary">rnhA</name>
    <name type="ordered locus">YPA_0559</name>
</gene>
<comment type="function">
    <text evidence="1">Endonuclease that specifically degrades the RNA of RNA-DNA hybrids.</text>
</comment>
<comment type="catalytic activity">
    <reaction evidence="1">
        <text>Endonucleolytic cleavage to 5'-phosphomonoester.</text>
        <dbReference type="EC" id="3.1.26.4"/>
    </reaction>
</comment>
<comment type="cofactor">
    <cofactor evidence="1">
        <name>Mg(2+)</name>
        <dbReference type="ChEBI" id="CHEBI:18420"/>
    </cofactor>
    <text evidence="1">Binds 1 Mg(2+) ion per subunit. May bind a second metal ion at a regulatory site, or after substrate binding.</text>
</comment>
<comment type="subunit">
    <text evidence="1">Monomer.</text>
</comment>
<comment type="subcellular location">
    <subcellularLocation>
        <location evidence="1">Cytoplasm</location>
    </subcellularLocation>
</comment>
<comment type="similarity">
    <text evidence="1">Belongs to the RNase H family.</text>
</comment>
<name>RNH_YERPA</name>
<accession>Q1CAJ5</accession>
<proteinExistence type="inferred from homology"/>